<protein>
    <recommendedName>
        <fullName>Neurovirulence factor ICP34.5</fullName>
    </recommendedName>
    <alternativeName>
        <fullName>Infected cell protein 34.5</fullName>
    </alternativeName>
    <alternativeName>
        <fullName>protein gamma(1)34.5</fullName>
    </alternativeName>
</protein>
<sequence length="245" mass="25981">MARRRRRHRGPRRPRPPGPTGAVPTAQSQVTSTPNSEPVVRSAPAAGGPPPSCSLLLRQWLHVPESASDDDDDDDWPDSPPPEPAPEARPTAAAPRPRSPPPGAGPGGGANPSHPPSRPFRLPPRLALRLRVTAEHLARLRLRRAGGEGAPKPPATPATPATPATPATPATPARVRFSPHVRVRHLVVWASAARLARRGSWARERADRARFRRRVAEAEAVIGPCLGPEARARALARGAGPANSV</sequence>
<accession>P37319</accession>
<evidence type="ECO:0000250" key="1"/>
<evidence type="ECO:0000250" key="2">
    <source>
        <dbReference type="UniProtKB" id="P08353"/>
    </source>
</evidence>
<evidence type="ECO:0000250" key="3">
    <source>
        <dbReference type="UniProtKB" id="P36313"/>
    </source>
</evidence>
<evidence type="ECO:0000256" key="4">
    <source>
        <dbReference type="SAM" id="MobiDB-lite"/>
    </source>
</evidence>
<evidence type="ECO:0000305" key="5"/>
<organismHost>
    <name type="scientific">Homo sapiens</name>
    <name type="common">Human</name>
    <dbReference type="NCBI Taxonomy" id="9606"/>
</organismHost>
<gene>
    <name type="primary">RL1</name>
    <name type="synonym">ICP34.5</name>
</gene>
<feature type="chain" id="PRO_0000115809" description="Neurovirulence factor ICP34.5">
    <location>
        <begin position="1"/>
        <end position="245"/>
    </location>
</feature>
<feature type="repeat" description="1">
    <location>
        <begin position="155"/>
        <end position="157"/>
    </location>
</feature>
<feature type="repeat" description="2">
    <location>
        <begin position="158"/>
        <end position="160"/>
    </location>
</feature>
<feature type="repeat" description="3">
    <location>
        <begin position="161"/>
        <end position="163"/>
    </location>
</feature>
<feature type="repeat" description="4">
    <location>
        <begin position="164"/>
        <end position="166"/>
    </location>
</feature>
<feature type="repeat" description="5">
    <location>
        <begin position="167"/>
        <end position="169"/>
    </location>
</feature>
<feature type="repeat" description="6">
    <location>
        <begin position="170"/>
        <end position="172"/>
    </location>
</feature>
<feature type="region of interest" description="Disordered" evidence="4">
    <location>
        <begin position="1"/>
        <end position="122"/>
    </location>
</feature>
<feature type="region of interest" description="Required for nucleolar localization" evidence="1">
    <location>
        <begin position="1"/>
        <end position="17"/>
    </location>
</feature>
<feature type="region of interest" description="Disordered" evidence="4">
    <location>
        <begin position="143"/>
        <end position="172"/>
    </location>
</feature>
<feature type="region of interest" description="6 X 3 AA tandem repeats of A-T-P">
    <location>
        <begin position="155"/>
        <end position="172"/>
    </location>
</feature>
<feature type="region of interest" description="Binding to PP1CA" evidence="1">
    <location>
        <begin position="172"/>
        <end position="185"/>
    </location>
</feature>
<feature type="region of interest" description="Interaction with host PPP1CA" evidence="2">
    <location>
        <begin position="172"/>
        <end position="185"/>
    </location>
</feature>
<feature type="region of interest" description="Important for interferon resistance" evidence="1">
    <location>
        <begin position="187"/>
        <end position="245"/>
    </location>
</feature>
<feature type="region of interest" description="Interaction with host EIF2S1/EIF-2ALPHA" evidence="2">
    <location>
        <begin position="215"/>
        <end position="230"/>
    </location>
</feature>
<feature type="short sequence motif" description="Nuclear export signal" evidence="1">
    <location>
        <begin position="122"/>
        <end position="131"/>
    </location>
</feature>
<feature type="short sequence motif" description="Bipartite nuclear localization signal" evidence="1">
    <location>
        <begin position="197"/>
        <end position="215"/>
    </location>
</feature>
<feature type="compositionally biased region" description="Basic residues" evidence="4">
    <location>
        <begin position="1"/>
        <end position="15"/>
    </location>
</feature>
<feature type="compositionally biased region" description="Polar residues" evidence="4">
    <location>
        <begin position="25"/>
        <end position="36"/>
    </location>
</feature>
<feature type="compositionally biased region" description="Acidic residues" evidence="4">
    <location>
        <begin position="67"/>
        <end position="77"/>
    </location>
</feature>
<feature type="compositionally biased region" description="Pro residues" evidence="4">
    <location>
        <begin position="78"/>
        <end position="87"/>
    </location>
</feature>
<feature type="compositionally biased region" description="Pro residues" evidence="4">
    <location>
        <begin position="113"/>
        <end position="122"/>
    </location>
</feature>
<feature type="compositionally biased region" description="Low complexity" evidence="4">
    <location>
        <begin position="158"/>
        <end position="172"/>
    </location>
</feature>
<dbReference type="EMBL" id="M33700">
    <property type="protein sequence ID" value="AAA45791.1"/>
    <property type="molecule type" value="Genomic_DNA"/>
</dbReference>
<dbReference type="GO" id="GO:0030430">
    <property type="term" value="C:host cell cytoplasm"/>
    <property type="evidence" value="ECO:0007669"/>
    <property type="project" value="UniProtKB-SubCell"/>
</dbReference>
<dbReference type="GO" id="GO:0044196">
    <property type="term" value="C:host cell nucleolus"/>
    <property type="evidence" value="ECO:0007669"/>
    <property type="project" value="UniProtKB-SubCell"/>
</dbReference>
<dbReference type="GO" id="GO:0044423">
    <property type="term" value="C:virion component"/>
    <property type="evidence" value="ECO:0007669"/>
    <property type="project" value="UniProtKB-KW"/>
</dbReference>
<dbReference type="GO" id="GO:0004865">
    <property type="term" value="F:protein serine/threonine phosphatase inhibitor activity"/>
    <property type="evidence" value="ECO:0007669"/>
    <property type="project" value="UniProtKB-KW"/>
</dbReference>
<dbReference type="GO" id="GO:0034976">
    <property type="term" value="P:response to endoplasmic reticulum stress"/>
    <property type="evidence" value="ECO:0007669"/>
    <property type="project" value="TreeGrafter"/>
</dbReference>
<dbReference type="GO" id="GO:0140321">
    <property type="term" value="P:symbiont-mediated suppression of host autophagy"/>
    <property type="evidence" value="ECO:0007669"/>
    <property type="project" value="UniProtKB-KW"/>
</dbReference>
<dbReference type="GO" id="GO:0052170">
    <property type="term" value="P:symbiont-mediated suppression of host innate immune response"/>
    <property type="evidence" value="ECO:0007669"/>
    <property type="project" value="UniProtKB-KW"/>
</dbReference>
<dbReference type="GO" id="GO:0039606">
    <property type="term" value="P:symbiont-mediated suppression of host translation initiation"/>
    <property type="evidence" value="ECO:0007669"/>
    <property type="project" value="UniProtKB-KW"/>
</dbReference>
<dbReference type="GO" id="GO:0039502">
    <property type="term" value="P:symbiont-mediated suppression of host type I interferon-mediated signaling pathway"/>
    <property type="evidence" value="ECO:0007669"/>
    <property type="project" value="UniProtKB-KW"/>
</dbReference>
<dbReference type="InterPro" id="IPR051254">
    <property type="entry name" value="PPP1R15"/>
</dbReference>
<dbReference type="PANTHER" id="PTHR16489">
    <property type="entry name" value="GH11727P"/>
    <property type="match status" value="1"/>
</dbReference>
<dbReference type="PANTHER" id="PTHR16489:SF14">
    <property type="entry name" value="PROTEIN PHOSPHATASE 1 REGULATORY SUBUNIT 15A"/>
    <property type="match status" value="1"/>
</dbReference>
<proteinExistence type="inferred from homology"/>
<keyword id="KW-1035">Host cytoplasm</keyword>
<keyword id="KW-1048">Host nucleus</keyword>
<keyword id="KW-0945">Host-virus interaction</keyword>
<keyword id="KW-1083">Inhibition of host autophagy by virus</keyword>
<keyword id="KW-1090">Inhibition of host innate immune response by virus</keyword>
<keyword id="KW-1114">Inhibition of host interferon signaling pathway by virus</keyword>
<keyword id="KW-1113">Inhibition of host RLR pathway by virus</keyword>
<keyword id="KW-0922">Interferon antiviral system evasion</keyword>
<keyword id="KW-1126">Modulation of host PP1 activity by virus</keyword>
<keyword id="KW-0677">Repeat</keyword>
<keyword id="KW-0899">Viral immunoevasion</keyword>
<keyword id="KW-0946">Virion</keyword>
<keyword id="KW-0843">Virulence</keyword>
<reference key="1">
    <citation type="journal article" date="1990" name="J. Virol.">
        <title>The herpes simplex virus 1 gene for ICP34.5, which maps in inverted repeats, is conserved in several limited-passage isolates but not in strain 17syn+.</title>
        <authorList>
            <person name="Chou J."/>
            <person name="Roizman B."/>
        </authorList>
    </citation>
    <scope>NUCLEOTIDE SEQUENCE [GENOMIC DNA]</scope>
</reference>
<comment type="function">
    <text evidence="2 3">Inhibits the establishment of the immune response and of the integrated stress response (ISR) in the infected cell (By similarity). Plays essential roles in viral nuclear egress to mediate capsid transit across the nuclear membrane (By similarity). Facilitates nuclear egress cooperatively with host C1QBP and protein kinase C/PKC to induce lamin A/C phosphorylation and subsequent reorganization (By similarity). In turn, lamina disassembles and nuclear egress occurs. Recruits the serine/threonine protein phosphatase PPP1CA/PP1-alpha to dephosphorylate the translation initiation factor EIF2S1/eIF-2alpha, thereby couteracting the host shutoff of protein synthesis involving double-stranded RNA-dependent protein kinase EIF2AK2/PKR (By similarity). In turn, controls host IRF3 activation and subsequently inhibits host interferon response (By similarity). Controls the DNA sensing pathway by interacting with and inhibiting host STING/TMEM173. Also down-modulates the host MHC class II proteins cell surface expression (By similarity). Acts as a neurovirulence factor that has a profound effect on the growth of the virus in central nervous system tissue, by interacting with host BECN1 and thereby antagonizing the host autophagy response (By similarity).</text>
</comment>
<comment type="subunit">
    <text evidence="3">Interacts with host PPP1CA to form a high-molecular-weight complex that dephosphorylates EIF2S1/eIF-2alpha. Interacts with host EIF2S1/eIF-2alpha; this interaction is crucial for the specific dephosphorylation of EIF2S1/eIF-2alpha by PPP1CA. Binds to proliferating cell nuclear antigen (PCNA), which may release host cells from growth arrest and facilitate viral replication. Interacts (via N-terminus) with host C1QBP and PRKCA. Interacts with protein UL31. Interacts with host TBK1. Interacts with host STING/TMEM173; this interaction inhibits the intracellular DNA sensing pathway. Interacts with host BECN1; this interaction modulates host autophagy.</text>
</comment>
<comment type="subcellular location">
    <subcellularLocation>
        <location evidence="2">Host cytoplasm</location>
    </subcellularLocation>
    <subcellularLocation>
        <location evidence="2">Host nucleus</location>
    </subcellularLocation>
    <subcellularLocation>
        <location evidence="2">Host nucleus</location>
        <location evidence="2">Host nucleolus</location>
    </subcellularLocation>
    <subcellularLocation>
        <location evidence="2">Virion</location>
    </subcellularLocation>
    <text evidence="2">At early times in infection, colocalizes with PCNA and replication proteins in the host cell nucleus, before accumulating in the host cytoplasm by 8 to 12 hours post-infection.</text>
</comment>
<comment type="domain">
    <text evidence="1">The triplet repeats region may play a role in modulating virus egress.</text>
</comment>
<comment type="miscellaneous">
    <text evidence="1">ICP34.5 is detected as early as 3 hpi prior to viral replication but reaches maximal levels late in infection. ICP34.5 gene is therefore classified as gamma-1 or leaky late gene (By similarity).</text>
</comment>
<comment type="miscellaneous">
    <text evidence="1">The phosphatase activity of the ICP34.5-PP1 complex toward EIF2S1 is specifically inhibited by Salubrinal, which inhibits viral replication.</text>
</comment>
<comment type="similarity">
    <text evidence="5">Belongs to the PPP1R15 family.</text>
</comment>
<organism>
    <name type="scientific">Human herpesvirus 1 (strain MGH-10)</name>
    <name type="common">HHV-1</name>
    <name type="synonym">Human herpes simplex virus 1</name>
    <dbReference type="NCBI Taxonomy" id="37107"/>
    <lineage>
        <taxon>Viruses</taxon>
        <taxon>Duplodnaviria</taxon>
        <taxon>Heunggongvirae</taxon>
        <taxon>Peploviricota</taxon>
        <taxon>Herviviricetes</taxon>
        <taxon>Herpesvirales</taxon>
        <taxon>Orthoherpesviridae</taxon>
        <taxon>Alphaherpesvirinae</taxon>
        <taxon>Simplexvirus</taxon>
        <taxon>Simplexvirus humanalpha1</taxon>
        <taxon>Human herpesvirus 1</taxon>
    </lineage>
</organism>
<name>ICP34_HHV1N</name>